<proteinExistence type="evidence at protein level"/>
<protein>
    <recommendedName>
        <fullName>Trehalose/maltose transport system permease protein MalF</fullName>
    </recommendedName>
</protein>
<feature type="chain" id="PRO_0000421286" description="Trehalose/maltose transport system permease protein MalF">
    <location>
        <begin position="1"/>
        <end position="295"/>
    </location>
</feature>
<feature type="transmembrane region" description="Helical" evidence="1">
    <location>
        <begin position="16"/>
        <end position="36"/>
    </location>
</feature>
<feature type="transmembrane region" description="Helical" evidence="1">
    <location>
        <begin position="79"/>
        <end position="99"/>
    </location>
</feature>
<feature type="transmembrane region" description="Helical" evidence="1">
    <location>
        <begin position="112"/>
        <end position="132"/>
    </location>
</feature>
<feature type="transmembrane region" description="Helical" evidence="1">
    <location>
        <begin position="146"/>
        <end position="166"/>
    </location>
</feature>
<feature type="transmembrane region" description="Helical" evidence="1">
    <location>
        <begin position="210"/>
        <end position="230"/>
    </location>
</feature>
<feature type="transmembrane region" description="Helical" evidence="1">
    <location>
        <begin position="236"/>
        <end position="256"/>
    </location>
</feature>
<feature type="transmembrane region" description="Helical" evidence="1">
    <location>
        <begin position="267"/>
        <end position="287"/>
    </location>
</feature>
<feature type="domain" description="ABC transmembrane type-1" evidence="1">
    <location>
        <begin position="75"/>
        <end position="286"/>
    </location>
</feature>
<feature type="sequence conflict" description="In Ref. 1; AAC38137." evidence="5" ref="1">
    <original>F</original>
    <variation>L</variation>
    <location>
        <position position="176"/>
    </location>
</feature>
<dbReference type="EMBL" id="AF012836">
    <property type="protein sequence ID" value="AAC38137.1"/>
    <property type="status" value="ALT_INIT"/>
    <property type="molecule type" value="Genomic_DNA"/>
</dbReference>
<dbReference type="EMBL" id="AF307053">
    <property type="protein sequence ID" value="AAG45389.1"/>
    <property type="molecule type" value="Genomic_DNA"/>
</dbReference>
<dbReference type="EMBL" id="CP006670">
    <property type="protein sequence ID" value="EHR78233.1"/>
    <property type="molecule type" value="Genomic_DNA"/>
</dbReference>
<dbReference type="PIR" id="T46751">
    <property type="entry name" value="T46751"/>
</dbReference>
<dbReference type="RefSeq" id="WP_004068722.1">
    <property type="nucleotide sequence ID" value="NC_022084.1"/>
</dbReference>
<dbReference type="SMR" id="O51924"/>
<dbReference type="STRING" id="523849.OCC_03557"/>
<dbReference type="TCDB" id="3.A.1.1.7">
    <property type="family name" value="the atp-binding cassette (abc) superfamily"/>
</dbReference>
<dbReference type="PaxDb" id="523849-OCC_03557"/>
<dbReference type="GeneID" id="16548948"/>
<dbReference type="KEGG" id="tlt:OCC_03557"/>
<dbReference type="HOGENOM" id="CLU_016047_0_3_2"/>
<dbReference type="OrthoDB" id="45815at2157"/>
<dbReference type="Proteomes" id="UP000015502">
    <property type="component" value="Chromosome"/>
</dbReference>
<dbReference type="GO" id="GO:0043190">
    <property type="term" value="C:ATP-binding cassette (ABC) transporter complex"/>
    <property type="evidence" value="ECO:0000314"/>
    <property type="project" value="UniProtKB"/>
</dbReference>
<dbReference type="GO" id="GO:0055085">
    <property type="term" value="P:transmembrane transport"/>
    <property type="evidence" value="ECO:0007669"/>
    <property type="project" value="InterPro"/>
</dbReference>
<dbReference type="CDD" id="cd06261">
    <property type="entry name" value="TM_PBP2"/>
    <property type="match status" value="1"/>
</dbReference>
<dbReference type="Gene3D" id="1.10.3720.10">
    <property type="entry name" value="MetI-like"/>
    <property type="match status" value="1"/>
</dbReference>
<dbReference type="InterPro" id="IPR000515">
    <property type="entry name" value="MetI-like"/>
</dbReference>
<dbReference type="InterPro" id="IPR035906">
    <property type="entry name" value="MetI-like_sf"/>
</dbReference>
<dbReference type="PANTHER" id="PTHR43005">
    <property type="entry name" value="BLR7065 PROTEIN"/>
    <property type="match status" value="1"/>
</dbReference>
<dbReference type="PANTHER" id="PTHR43005:SF2">
    <property type="entry name" value="INTEGRAL MEMBRANE SUGAR TRANSPORT PROTEIN"/>
    <property type="match status" value="1"/>
</dbReference>
<dbReference type="Pfam" id="PF00528">
    <property type="entry name" value="BPD_transp_1"/>
    <property type="match status" value="1"/>
</dbReference>
<dbReference type="SUPFAM" id="SSF161098">
    <property type="entry name" value="MetI-like"/>
    <property type="match status" value="1"/>
</dbReference>
<dbReference type="PROSITE" id="PS50928">
    <property type="entry name" value="ABC_TM1"/>
    <property type="match status" value="1"/>
</dbReference>
<comment type="function">
    <text evidence="2 4">Part of the ABC transporter complex MalEFGK involved in trehalose/maltose import. Responsible for the translocation of the substrate across the membrane.</text>
</comment>
<comment type="subunit">
    <text evidence="2 3">The complex is composed of two ATP-binding proteins (MalK), two transmembrane proteins (MalG and MalF) and a solute-binding protein (MalE).</text>
</comment>
<comment type="subcellular location">
    <subcellularLocation>
        <location evidence="2">Cell membrane</location>
        <topology evidence="1 2">Multi-pass membrane protein</topology>
    </subcellularLocation>
</comment>
<comment type="similarity">
    <text evidence="5">Belongs to the binding-protein-dependent transport system permease family.</text>
</comment>
<comment type="sequence caution" evidence="5">
    <conflict type="erroneous initiation">
        <sequence resource="EMBL-CDS" id="AAC38137"/>
    </conflict>
    <text>Extended N-terminus.</text>
</comment>
<organism>
    <name type="scientific">Thermococcus litoralis (strain ATCC 51850 / DSM 5473 / JCM 8560 / NS-C)</name>
    <dbReference type="NCBI Taxonomy" id="523849"/>
    <lineage>
        <taxon>Archaea</taxon>
        <taxon>Methanobacteriati</taxon>
        <taxon>Methanobacteriota</taxon>
        <taxon>Thermococci</taxon>
        <taxon>Thermococcales</taxon>
        <taxon>Thermococcaceae</taxon>
        <taxon>Thermococcus</taxon>
    </lineage>
</organism>
<gene>
    <name type="primary">malF</name>
    <name type="ORF">OCC_03557</name>
</gene>
<name>MALF_THELN</name>
<sequence length="295" mass="33054">MDNNLTSKLKYREAKLGYLMILPLLTVVLVFIILPVMGTFWISLHRDVTFIPEKPFVGLRNYLRVLSAREFWYSTFVTVSFSFVSVSLETILGLSFALILNERLKGRGVLRAIVLIPWAVPTIISARTWELMYNYSYGLFNWILSILGVSPVNWLGTPISAFFAIVIADVWKTTPFMTLLLLAGLQAIPQDLYEAALIDGASMFERFKSITLPLLKPVLIVALILRTIDALRVFDIIYVLTGGGPGGATTSISLLAFNYYNLGDYGIGSAISILTFVLVLSFTIVYLKVGRFRRD</sequence>
<accession>O51924</accession>
<accession>H3ZP66</accession>
<accession>Q9HH26</accession>
<keyword id="KW-1003">Cell membrane</keyword>
<keyword id="KW-0472">Membrane</keyword>
<keyword id="KW-0762">Sugar transport</keyword>
<keyword id="KW-0812">Transmembrane</keyword>
<keyword id="KW-1133">Transmembrane helix</keyword>
<keyword id="KW-0813">Transport</keyword>
<reference key="1">
    <citation type="journal article" date="1998" name="J. Bacteriol.">
        <title>Archaeal binding protein-dependent ABC transporter: molecular and biochemical analysis of the trehalose/maltose transport system of the hyperthermophilic archaeon Thermococcus litoralis.</title>
        <authorList>
            <person name="Horlacher R."/>
            <person name="Xavier K.B."/>
            <person name="Santos H."/>
            <person name="DiRuggiero J."/>
            <person name="Kossmann M."/>
            <person name="Boos W."/>
        </authorList>
    </citation>
    <scope>NUCLEOTIDE SEQUENCE [GENOMIC DNA]</scope>
    <source>
        <strain>ATCC 51850 / DSM 5473 / JCM 8560 / NS-C</strain>
    </source>
</reference>
<reference key="2">
    <citation type="journal article" date="2000" name="Mol. Microbiol.">
        <title>Evidence of recent lateral gene transfer among hyperthermophilic archaea.</title>
        <authorList>
            <person name="Diruggiero J."/>
            <person name="Dunn D."/>
            <person name="Maeder D.L."/>
            <person name="Holley-Shanks R."/>
            <person name="Chatard J."/>
            <person name="Horlacher R."/>
            <person name="Robb F.T."/>
            <person name="Boos W."/>
            <person name="Weiss R.B."/>
        </authorList>
    </citation>
    <scope>NUCLEOTIDE SEQUENCE [GENOMIC DNA]</scope>
    <source>
        <strain>ATCC 51850 / DSM 5473 / JCM 8560 / NS-C</strain>
    </source>
</reference>
<reference key="3">
    <citation type="journal article" date="2012" name="J. Bacteriol.">
        <title>Genome sequence of the model hyperthermophilic archaeon Thermococcus litoralis NS-C.</title>
        <authorList>
            <person name="Gardner A.F."/>
            <person name="Kumar S."/>
            <person name="Perler F.B."/>
        </authorList>
    </citation>
    <scope>NUCLEOTIDE SEQUENCE [LARGE SCALE GENOMIC DNA]</scope>
    <source>
        <strain>ATCC 51850 / DSM 5473 / JCM 8560 / NS-C</strain>
    </source>
</reference>
<reference key="4">
    <citation type="journal article" date="1996" name="J. Bacteriol.">
        <title>High-affinity maltose/trehalose transport system in the hyperthermophilic archaeon Thermococcus litoralis.</title>
        <authorList>
            <person name="Xavier K.B."/>
            <person name="Martins L.O."/>
            <person name="Peist R."/>
            <person name="Kossmann M."/>
            <person name="Boos W."/>
            <person name="Santos H."/>
        </authorList>
    </citation>
    <scope>FUNCTION</scope>
    <source>
        <strain>ATCC 51850 / DSM 5473 / JCM 8560 / NS-C</strain>
    </source>
</reference>
<reference key="5">
    <citation type="journal article" date="2001" name="Eur. J. Biochem.">
        <title>Purification and characterization of the heterologously expressed trehalose/maltose ABC transporter complex of the hyperthermophilic archaeon Thermococcus litoralis.</title>
        <authorList>
            <person name="Greller G."/>
            <person name="Riek R."/>
            <person name="Boos W."/>
        </authorList>
    </citation>
    <scope>FUNCTION</scope>
    <scope>SUBUNIT</scope>
    <scope>SUBCELLULAR LOCATION</scope>
</reference>
<reference key="6">
    <citation type="journal article" date="2002" name="Acta Crystallogr. D">
        <title>Crystallization and preliminary X-ray analysis of the trehalose/maltose ABC transporter MalFGK2 from Thermococcus litoralis.</title>
        <authorList>
            <person name="Schiefner A."/>
            <person name="Diederichs K."/>
            <person name="Hashimoto K."/>
            <person name="Boos W."/>
            <person name="Welte W."/>
        </authorList>
    </citation>
    <scope>CRYSTALLIZATION</scope>
    <scope>SUBUNIT</scope>
</reference>
<evidence type="ECO:0000255" key="1">
    <source>
        <dbReference type="PROSITE-ProRule" id="PRU00441"/>
    </source>
</evidence>
<evidence type="ECO:0000269" key="2">
    <source>
    </source>
</evidence>
<evidence type="ECO:0000269" key="3">
    <source>
    </source>
</evidence>
<evidence type="ECO:0000269" key="4">
    <source>
    </source>
</evidence>
<evidence type="ECO:0000305" key="5"/>